<evidence type="ECO:0000255" key="1">
    <source>
        <dbReference type="HAMAP-Rule" id="MF_01014"/>
    </source>
</evidence>
<keyword id="KW-0028">Amino-acid biosynthesis</keyword>
<keyword id="KW-0963">Cytoplasm</keyword>
<keyword id="KW-0368">Histidine biosynthesis</keyword>
<keyword id="KW-0413">Isomerase</keyword>
<keyword id="KW-1185">Reference proteome</keyword>
<dbReference type="EC" id="5.3.1.16" evidence="1"/>
<dbReference type="EMBL" id="CP000804">
    <property type="protein sequence ID" value="ABU58982.1"/>
    <property type="molecule type" value="Genomic_DNA"/>
</dbReference>
<dbReference type="RefSeq" id="WP_012121406.1">
    <property type="nucleotide sequence ID" value="NC_009767.1"/>
</dbReference>
<dbReference type="SMR" id="A7NN50"/>
<dbReference type="STRING" id="383372.Rcas_2920"/>
<dbReference type="KEGG" id="rca:Rcas_2920"/>
<dbReference type="eggNOG" id="COG0106">
    <property type="taxonomic scope" value="Bacteria"/>
</dbReference>
<dbReference type="HOGENOM" id="CLU_048577_1_1_0"/>
<dbReference type="OrthoDB" id="9781903at2"/>
<dbReference type="UniPathway" id="UPA00031">
    <property type="reaction ID" value="UER00009"/>
</dbReference>
<dbReference type="Proteomes" id="UP000000263">
    <property type="component" value="Chromosome"/>
</dbReference>
<dbReference type="GO" id="GO:0005737">
    <property type="term" value="C:cytoplasm"/>
    <property type="evidence" value="ECO:0007669"/>
    <property type="project" value="UniProtKB-SubCell"/>
</dbReference>
<dbReference type="GO" id="GO:0003949">
    <property type="term" value="F:1-(5-phosphoribosyl)-5-[(5-phosphoribosylamino)methylideneamino]imidazole-4-carboxamide isomerase activity"/>
    <property type="evidence" value="ECO:0007669"/>
    <property type="project" value="UniProtKB-UniRule"/>
</dbReference>
<dbReference type="GO" id="GO:0000105">
    <property type="term" value="P:L-histidine biosynthetic process"/>
    <property type="evidence" value="ECO:0007669"/>
    <property type="project" value="UniProtKB-UniRule"/>
</dbReference>
<dbReference type="GO" id="GO:0000162">
    <property type="term" value="P:L-tryptophan biosynthetic process"/>
    <property type="evidence" value="ECO:0007669"/>
    <property type="project" value="TreeGrafter"/>
</dbReference>
<dbReference type="CDD" id="cd04732">
    <property type="entry name" value="HisA"/>
    <property type="match status" value="1"/>
</dbReference>
<dbReference type="FunFam" id="3.20.20.70:FF:000009">
    <property type="entry name" value="1-(5-phosphoribosyl)-5-[(5-phosphoribosylamino)methylideneamino] imidazole-4-carboxamide isomerase"/>
    <property type="match status" value="1"/>
</dbReference>
<dbReference type="Gene3D" id="3.20.20.70">
    <property type="entry name" value="Aldolase class I"/>
    <property type="match status" value="1"/>
</dbReference>
<dbReference type="HAMAP" id="MF_01014">
    <property type="entry name" value="HisA"/>
    <property type="match status" value="1"/>
</dbReference>
<dbReference type="InterPro" id="IPR013785">
    <property type="entry name" value="Aldolase_TIM"/>
</dbReference>
<dbReference type="InterPro" id="IPR006062">
    <property type="entry name" value="His_biosynth"/>
</dbReference>
<dbReference type="InterPro" id="IPR006063">
    <property type="entry name" value="HisA_bact_arch"/>
</dbReference>
<dbReference type="InterPro" id="IPR044524">
    <property type="entry name" value="Isoase_HisA-like"/>
</dbReference>
<dbReference type="InterPro" id="IPR023016">
    <property type="entry name" value="Isoase_HisA-like_bact"/>
</dbReference>
<dbReference type="InterPro" id="IPR011060">
    <property type="entry name" value="RibuloseP-bd_barrel"/>
</dbReference>
<dbReference type="NCBIfam" id="TIGR00007">
    <property type="entry name" value="1-(5-phosphoribosyl)-5-[(5-phosphoribosylamino)methylideneamino]imidazole-4-carboxamide isomerase"/>
    <property type="match status" value="1"/>
</dbReference>
<dbReference type="PANTHER" id="PTHR43090">
    <property type="entry name" value="1-(5-PHOSPHORIBOSYL)-5-[(5-PHOSPHORIBOSYLAMINO)METHYLIDENEAMINO] IMIDAZOLE-4-CARBOXAMIDE ISOMERASE"/>
    <property type="match status" value="1"/>
</dbReference>
<dbReference type="PANTHER" id="PTHR43090:SF2">
    <property type="entry name" value="1-(5-PHOSPHORIBOSYL)-5-[(5-PHOSPHORIBOSYLAMINO)METHYLIDENEAMINO] IMIDAZOLE-4-CARBOXAMIDE ISOMERASE"/>
    <property type="match status" value="1"/>
</dbReference>
<dbReference type="Pfam" id="PF00977">
    <property type="entry name" value="His_biosynth"/>
    <property type="match status" value="1"/>
</dbReference>
<dbReference type="SUPFAM" id="SSF51366">
    <property type="entry name" value="Ribulose-phoshate binding barrel"/>
    <property type="match status" value="1"/>
</dbReference>
<reference key="1">
    <citation type="submission" date="2007-08" db="EMBL/GenBank/DDBJ databases">
        <title>Complete sequence of Roseiflexus castenholzii DSM 13941.</title>
        <authorList>
            <consortium name="US DOE Joint Genome Institute"/>
            <person name="Copeland A."/>
            <person name="Lucas S."/>
            <person name="Lapidus A."/>
            <person name="Barry K."/>
            <person name="Glavina del Rio T."/>
            <person name="Dalin E."/>
            <person name="Tice H."/>
            <person name="Pitluck S."/>
            <person name="Thompson L.S."/>
            <person name="Brettin T."/>
            <person name="Bruce D."/>
            <person name="Detter J.C."/>
            <person name="Han C."/>
            <person name="Tapia R."/>
            <person name="Schmutz J."/>
            <person name="Larimer F."/>
            <person name="Land M."/>
            <person name="Hauser L."/>
            <person name="Kyrpides N."/>
            <person name="Mikhailova N."/>
            <person name="Bryant D.A."/>
            <person name="Hanada S."/>
            <person name="Tsukatani Y."/>
            <person name="Richardson P."/>
        </authorList>
    </citation>
    <scope>NUCLEOTIDE SEQUENCE [LARGE SCALE GENOMIC DNA]</scope>
    <source>
        <strain>DSM 13941 / HLO8</strain>
    </source>
</reference>
<protein>
    <recommendedName>
        <fullName evidence="1">1-(5-phosphoribosyl)-5-[(5-phosphoribosylamino)methylideneamino] imidazole-4-carboxamide isomerase</fullName>
        <ecNumber evidence="1">5.3.1.16</ecNumber>
    </recommendedName>
    <alternativeName>
        <fullName evidence="1">Phosphoribosylformimino-5-aminoimidazole carboxamide ribotide isomerase</fullName>
    </alternativeName>
</protein>
<comment type="catalytic activity">
    <reaction evidence="1">
        <text>1-(5-phospho-beta-D-ribosyl)-5-[(5-phospho-beta-D-ribosylamino)methylideneamino]imidazole-4-carboxamide = 5-[(5-phospho-1-deoxy-D-ribulos-1-ylimino)methylamino]-1-(5-phospho-beta-D-ribosyl)imidazole-4-carboxamide</text>
        <dbReference type="Rhea" id="RHEA:15469"/>
        <dbReference type="ChEBI" id="CHEBI:58435"/>
        <dbReference type="ChEBI" id="CHEBI:58525"/>
        <dbReference type="EC" id="5.3.1.16"/>
    </reaction>
</comment>
<comment type="pathway">
    <text evidence="1">Amino-acid biosynthesis; L-histidine biosynthesis; L-histidine from 5-phospho-alpha-D-ribose 1-diphosphate: step 4/9.</text>
</comment>
<comment type="subcellular location">
    <subcellularLocation>
        <location evidence="1">Cytoplasm</location>
    </subcellularLocation>
</comment>
<comment type="similarity">
    <text evidence="1">Belongs to the HisA/HisF family.</text>
</comment>
<sequence length="237" mass="25092">MEIIPAIDLKDGRCVRLYQGDFQQVTVYGDDPVAIAQHWFEQGAPRLHLVDLDGARSGQPVHTDIIRAIVRSFGAPVQLGGGLRSIEAVERALELGVQRVVLGTAAVEHPDMIAHLVAQFGDAIAVAIDARNGMAATAGWTETAAMSAVDLLERMVTLGVRRVIYTDISRDGTLSEPNIAATGALVRPDGPAIIASGGISTLDHLRRLADVGVEGAIVGRALYTGDLSLREALAAFQ</sequence>
<gene>
    <name evidence="1" type="primary">hisA</name>
    <name type="ordered locus">Rcas_2920</name>
</gene>
<accession>A7NN50</accession>
<name>HIS4_ROSCS</name>
<proteinExistence type="inferred from homology"/>
<feature type="chain" id="PRO_1000084107" description="1-(5-phosphoribosyl)-5-[(5-phosphoribosylamino)methylideneamino] imidazole-4-carboxamide isomerase">
    <location>
        <begin position="1"/>
        <end position="237"/>
    </location>
</feature>
<feature type="active site" description="Proton acceptor" evidence="1">
    <location>
        <position position="8"/>
    </location>
</feature>
<feature type="active site" description="Proton donor" evidence="1">
    <location>
        <position position="129"/>
    </location>
</feature>
<organism>
    <name type="scientific">Roseiflexus castenholzii (strain DSM 13941 / HLO8)</name>
    <dbReference type="NCBI Taxonomy" id="383372"/>
    <lineage>
        <taxon>Bacteria</taxon>
        <taxon>Bacillati</taxon>
        <taxon>Chloroflexota</taxon>
        <taxon>Chloroflexia</taxon>
        <taxon>Chloroflexales</taxon>
        <taxon>Roseiflexineae</taxon>
        <taxon>Roseiflexaceae</taxon>
        <taxon>Roseiflexus</taxon>
    </lineage>
</organism>